<dbReference type="EMBL" id="BX640423">
    <property type="protein sequence ID" value="CAE39909.1"/>
    <property type="molecule type" value="Genomic_DNA"/>
</dbReference>
<dbReference type="RefSeq" id="WP_003807142.1">
    <property type="nucleotide sequence ID" value="NC_002928.3"/>
</dbReference>
<dbReference type="SMR" id="Q7W224"/>
<dbReference type="KEGG" id="bpa:BPP0168"/>
<dbReference type="HOGENOM" id="CLU_161438_1_2_4"/>
<dbReference type="Proteomes" id="UP000001421">
    <property type="component" value="Chromosome"/>
</dbReference>
<dbReference type="Gene3D" id="3.30.70.260">
    <property type="match status" value="1"/>
</dbReference>
<dbReference type="HAMAP" id="MF_00659">
    <property type="entry name" value="UPF0250"/>
    <property type="match status" value="1"/>
</dbReference>
<dbReference type="InterPro" id="IPR007454">
    <property type="entry name" value="UPF0250_YbeD-like"/>
</dbReference>
<dbReference type="InterPro" id="IPR027471">
    <property type="entry name" value="YbeD-like_sf"/>
</dbReference>
<dbReference type="NCBIfam" id="NF002533">
    <property type="entry name" value="PRK02047.1"/>
    <property type="match status" value="1"/>
</dbReference>
<dbReference type="PANTHER" id="PTHR38036">
    <property type="entry name" value="UPF0250 PROTEIN YBED"/>
    <property type="match status" value="1"/>
</dbReference>
<dbReference type="PANTHER" id="PTHR38036:SF1">
    <property type="entry name" value="UPF0250 PROTEIN YBED"/>
    <property type="match status" value="1"/>
</dbReference>
<dbReference type="Pfam" id="PF04359">
    <property type="entry name" value="DUF493"/>
    <property type="match status" value="1"/>
</dbReference>
<dbReference type="SUPFAM" id="SSF117991">
    <property type="entry name" value="YbeD/HP0495-like"/>
    <property type="match status" value="1"/>
</dbReference>
<protein>
    <recommendedName>
        <fullName evidence="1">UPF0250 protein BPP0168</fullName>
    </recommendedName>
</protein>
<evidence type="ECO:0000255" key="1">
    <source>
        <dbReference type="HAMAP-Rule" id="MF_00659"/>
    </source>
</evidence>
<name>Y168_BORPA</name>
<gene>
    <name type="ordered locus">BPP0168</name>
</gene>
<sequence length="91" mass="10244">MHNIPPEESLIEYPSDFPIKVMGKQHPEFAQTLTEVVLQFDPAFDPASVEMRPSKGGNYMGLTFTVRATSREQLDSLYRALHGHPMVSIVL</sequence>
<comment type="similarity">
    <text evidence="1">Belongs to the UPF0250 family.</text>
</comment>
<reference key="1">
    <citation type="journal article" date="2003" name="Nat. Genet.">
        <title>Comparative analysis of the genome sequences of Bordetella pertussis, Bordetella parapertussis and Bordetella bronchiseptica.</title>
        <authorList>
            <person name="Parkhill J."/>
            <person name="Sebaihia M."/>
            <person name="Preston A."/>
            <person name="Murphy L.D."/>
            <person name="Thomson N.R."/>
            <person name="Harris D.E."/>
            <person name="Holden M.T.G."/>
            <person name="Churcher C.M."/>
            <person name="Bentley S.D."/>
            <person name="Mungall K.L."/>
            <person name="Cerdeno-Tarraga A.-M."/>
            <person name="Temple L."/>
            <person name="James K.D."/>
            <person name="Harris B."/>
            <person name="Quail M.A."/>
            <person name="Achtman M."/>
            <person name="Atkin R."/>
            <person name="Baker S."/>
            <person name="Basham D."/>
            <person name="Bason N."/>
            <person name="Cherevach I."/>
            <person name="Chillingworth T."/>
            <person name="Collins M."/>
            <person name="Cronin A."/>
            <person name="Davis P."/>
            <person name="Doggett J."/>
            <person name="Feltwell T."/>
            <person name="Goble A."/>
            <person name="Hamlin N."/>
            <person name="Hauser H."/>
            <person name="Holroyd S."/>
            <person name="Jagels K."/>
            <person name="Leather S."/>
            <person name="Moule S."/>
            <person name="Norberczak H."/>
            <person name="O'Neil S."/>
            <person name="Ormond D."/>
            <person name="Price C."/>
            <person name="Rabbinowitsch E."/>
            <person name="Rutter S."/>
            <person name="Sanders M."/>
            <person name="Saunders D."/>
            <person name="Seeger K."/>
            <person name="Sharp S."/>
            <person name="Simmonds M."/>
            <person name="Skelton J."/>
            <person name="Squares R."/>
            <person name="Squares S."/>
            <person name="Stevens K."/>
            <person name="Unwin L."/>
            <person name="Whitehead S."/>
            <person name="Barrell B.G."/>
            <person name="Maskell D.J."/>
        </authorList>
    </citation>
    <scope>NUCLEOTIDE SEQUENCE [LARGE SCALE GENOMIC DNA]</scope>
    <source>
        <strain>12822 / ATCC BAA-587 / NCTC 13253</strain>
    </source>
</reference>
<organism>
    <name type="scientific">Bordetella parapertussis (strain 12822 / ATCC BAA-587 / NCTC 13253)</name>
    <dbReference type="NCBI Taxonomy" id="257311"/>
    <lineage>
        <taxon>Bacteria</taxon>
        <taxon>Pseudomonadati</taxon>
        <taxon>Pseudomonadota</taxon>
        <taxon>Betaproteobacteria</taxon>
        <taxon>Burkholderiales</taxon>
        <taxon>Alcaligenaceae</taxon>
        <taxon>Bordetella</taxon>
    </lineage>
</organism>
<proteinExistence type="inferred from homology"/>
<accession>Q7W224</accession>
<feature type="chain" id="PRO_0000209290" description="UPF0250 protein BPP0168">
    <location>
        <begin position="1"/>
        <end position="91"/>
    </location>
</feature>